<accession>Q9HZY5</accession>
<feature type="chain" id="PRO_0000176953" description="Transcription elongation factor GreB">
    <location>
        <begin position="1"/>
        <end position="168"/>
    </location>
</feature>
<feature type="coiled-coil region" evidence="1">
    <location>
        <begin position="61"/>
        <end position="84"/>
    </location>
</feature>
<sequence>MSRYRPPRTAGTPLITPEGAARLRAELHELWHVRRPQVTQAVSEAAALGDRSENAEYIYGKKMLREIDSRVRFLRKRLENLKVVGERPADPNRVYFGAWVTLEDEDGEQARYRIVGPDELDLRNNQISIDSPLARALVGKELDAEVLVRTPAGEKLWFVVEIEYPPAP</sequence>
<protein>
    <recommendedName>
        <fullName evidence="1">Transcription elongation factor GreB</fullName>
    </recommendedName>
    <alternativeName>
        <fullName evidence="1">Transcript cleavage factor GreB</fullName>
    </alternativeName>
</protein>
<proteinExistence type="inferred from homology"/>
<reference key="1">
    <citation type="journal article" date="2000" name="Nature">
        <title>Complete genome sequence of Pseudomonas aeruginosa PAO1, an opportunistic pathogen.</title>
        <authorList>
            <person name="Stover C.K."/>
            <person name="Pham X.-Q.T."/>
            <person name="Erwin A.L."/>
            <person name="Mizoguchi S.D."/>
            <person name="Warrener P."/>
            <person name="Hickey M.J."/>
            <person name="Brinkman F.S.L."/>
            <person name="Hufnagle W.O."/>
            <person name="Kowalik D.J."/>
            <person name="Lagrou M."/>
            <person name="Garber R.L."/>
            <person name="Goltry L."/>
            <person name="Tolentino E."/>
            <person name="Westbrock-Wadman S."/>
            <person name="Yuan Y."/>
            <person name="Brody L.L."/>
            <person name="Coulter S.N."/>
            <person name="Folger K.R."/>
            <person name="Kas A."/>
            <person name="Larbig K."/>
            <person name="Lim R.M."/>
            <person name="Smith K.A."/>
            <person name="Spencer D.H."/>
            <person name="Wong G.K.-S."/>
            <person name="Wu Z."/>
            <person name="Paulsen I.T."/>
            <person name="Reizer J."/>
            <person name="Saier M.H. Jr."/>
            <person name="Hancock R.E.W."/>
            <person name="Lory S."/>
            <person name="Olson M.V."/>
        </authorList>
    </citation>
    <scope>NUCLEOTIDE SEQUENCE [LARGE SCALE GENOMIC DNA]</scope>
    <source>
        <strain>ATCC 15692 / DSM 22644 / CIP 104116 / JCM 14847 / LMG 12228 / 1C / PRS 101 / PAO1</strain>
    </source>
</reference>
<keyword id="KW-0175">Coiled coil</keyword>
<keyword id="KW-0238">DNA-binding</keyword>
<keyword id="KW-1185">Reference proteome</keyword>
<keyword id="KW-0804">Transcription</keyword>
<keyword id="KW-0805">Transcription regulation</keyword>
<gene>
    <name evidence="1" type="primary">greB</name>
    <name type="ordered locus">PA2859</name>
</gene>
<name>GREB_PSEAE</name>
<dbReference type="EMBL" id="AE004091">
    <property type="protein sequence ID" value="AAG06247.1"/>
    <property type="molecule type" value="Genomic_DNA"/>
</dbReference>
<dbReference type="PIR" id="G83288">
    <property type="entry name" value="G83288"/>
</dbReference>
<dbReference type="RefSeq" id="NP_251549.1">
    <property type="nucleotide sequence ID" value="NC_002516.2"/>
</dbReference>
<dbReference type="RefSeq" id="WP_003090951.1">
    <property type="nucleotide sequence ID" value="NZ_QZGE01000011.1"/>
</dbReference>
<dbReference type="SMR" id="Q9HZY5"/>
<dbReference type="FunCoup" id="Q9HZY5">
    <property type="interactions" value="138"/>
</dbReference>
<dbReference type="STRING" id="208964.PA2859"/>
<dbReference type="PaxDb" id="208964-PA2859"/>
<dbReference type="DNASU" id="879611"/>
<dbReference type="GeneID" id="879611"/>
<dbReference type="KEGG" id="pae:PA2859"/>
<dbReference type="PATRIC" id="fig|208964.12.peg.2999"/>
<dbReference type="PseudoCAP" id="PA2859"/>
<dbReference type="HOGENOM" id="CLU_101379_3_0_6"/>
<dbReference type="InParanoid" id="Q9HZY5"/>
<dbReference type="OrthoDB" id="5511940at2"/>
<dbReference type="PhylomeDB" id="Q9HZY5"/>
<dbReference type="BioCyc" id="PAER208964:G1FZ6-2909-MONOMER"/>
<dbReference type="Proteomes" id="UP000002438">
    <property type="component" value="Chromosome"/>
</dbReference>
<dbReference type="GO" id="GO:0003677">
    <property type="term" value="F:DNA binding"/>
    <property type="evidence" value="ECO:0007669"/>
    <property type="project" value="UniProtKB-UniRule"/>
</dbReference>
<dbReference type="GO" id="GO:0070063">
    <property type="term" value="F:RNA polymerase binding"/>
    <property type="evidence" value="ECO:0007669"/>
    <property type="project" value="InterPro"/>
</dbReference>
<dbReference type="GO" id="GO:0006354">
    <property type="term" value="P:DNA-templated transcription elongation"/>
    <property type="evidence" value="ECO:0000318"/>
    <property type="project" value="GO_Central"/>
</dbReference>
<dbReference type="GO" id="GO:0032784">
    <property type="term" value="P:regulation of DNA-templated transcription elongation"/>
    <property type="evidence" value="ECO:0007669"/>
    <property type="project" value="UniProtKB-UniRule"/>
</dbReference>
<dbReference type="FunFam" id="1.10.287.180:FF:000001">
    <property type="entry name" value="Transcription elongation factor GreA"/>
    <property type="match status" value="1"/>
</dbReference>
<dbReference type="FunFam" id="3.10.50.30:FF:000001">
    <property type="entry name" value="Transcription elongation factor GreA"/>
    <property type="match status" value="1"/>
</dbReference>
<dbReference type="Gene3D" id="3.10.50.30">
    <property type="entry name" value="Transcription elongation factor, GreA/GreB, C-terminal domain"/>
    <property type="match status" value="1"/>
</dbReference>
<dbReference type="Gene3D" id="1.10.287.180">
    <property type="entry name" value="Transcription elongation factor, GreA/GreB, N-terminal domain"/>
    <property type="match status" value="1"/>
</dbReference>
<dbReference type="HAMAP" id="MF_00105">
    <property type="entry name" value="GreA_GreB"/>
    <property type="match status" value="1"/>
</dbReference>
<dbReference type="HAMAP" id="MF_00930">
    <property type="entry name" value="GreB"/>
    <property type="match status" value="1"/>
</dbReference>
<dbReference type="InterPro" id="IPR036953">
    <property type="entry name" value="GreA/GreB_C_sf"/>
</dbReference>
<dbReference type="InterPro" id="IPR018151">
    <property type="entry name" value="TF_GreA/GreB_CS"/>
</dbReference>
<dbReference type="InterPro" id="IPR028624">
    <property type="entry name" value="Tscrpt_elong_fac_GreA/B"/>
</dbReference>
<dbReference type="InterPro" id="IPR001437">
    <property type="entry name" value="Tscrpt_elong_fac_GreA/B_C"/>
</dbReference>
<dbReference type="InterPro" id="IPR023459">
    <property type="entry name" value="Tscrpt_elong_fac_GreA/B_fam"/>
</dbReference>
<dbReference type="InterPro" id="IPR022691">
    <property type="entry name" value="Tscrpt_elong_fac_GreA/B_N"/>
</dbReference>
<dbReference type="InterPro" id="IPR036805">
    <property type="entry name" value="Tscrpt_elong_fac_GreA/B_N_sf"/>
</dbReference>
<dbReference type="InterPro" id="IPR006358">
    <property type="entry name" value="Tscrpt_elong_fac_GreB"/>
</dbReference>
<dbReference type="NCBIfam" id="TIGR01461">
    <property type="entry name" value="greB"/>
    <property type="match status" value="1"/>
</dbReference>
<dbReference type="NCBIfam" id="NF002506">
    <property type="entry name" value="PRK01885.1"/>
    <property type="match status" value="1"/>
</dbReference>
<dbReference type="PANTHER" id="PTHR30437">
    <property type="entry name" value="TRANSCRIPTION ELONGATION FACTOR GREA"/>
    <property type="match status" value="1"/>
</dbReference>
<dbReference type="PANTHER" id="PTHR30437:SF6">
    <property type="entry name" value="TRANSCRIPTION ELONGATION FACTOR GREB"/>
    <property type="match status" value="1"/>
</dbReference>
<dbReference type="Pfam" id="PF01272">
    <property type="entry name" value="GreA_GreB"/>
    <property type="match status" value="1"/>
</dbReference>
<dbReference type="Pfam" id="PF03449">
    <property type="entry name" value="GreA_GreB_N"/>
    <property type="match status" value="1"/>
</dbReference>
<dbReference type="PIRSF" id="PIRSF006092">
    <property type="entry name" value="GreA_GreB"/>
    <property type="match status" value="1"/>
</dbReference>
<dbReference type="SUPFAM" id="SSF54534">
    <property type="entry name" value="FKBP-like"/>
    <property type="match status" value="1"/>
</dbReference>
<dbReference type="SUPFAM" id="SSF46557">
    <property type="entry name" value="GreA transcript cleavage protein, N-terminal domain"/>
    <property type="match status" value="1"/>
</dbReference>
<dbReference type="PROSITE" id="PS00829">
    <property type="entry name" value="GREAB_1"/>
    <property type="match status" value="1"/>
</dbReference>
<comment type="function">
    <text evidence="1">Necessary for efficient RNA polymerase transcription elongation past template-encoded arresting sites. The arresting sites in DNA have the property of trapping a certain fraction of elongating RNA polymerases that pass through, resulting in locked ternary complexes. Cleavage of the nascent transcript by cleavage factors such as GreA or GreB allows the resumption of elongation from the new 3'terminus. GreB releases sequences of up to 9 nucleotides in length.</text>
</comment>
<comment type="similarity">
    <text evidence="1">Belongs to the GreA/GreB family. GreB subfamily.</text>
</comment>
<evidence type="ECO:0000255" key="1">
    <source>
        <dbReference type="HAMAP-Rule" id="MF_00930"/>
    </source>
</evidence>
<organism>
    <name type="scientific">Pseudomonas aeruginosa (strain ATCC 15692 / DSM 22644 / CIP 104116 / JCM 14847 / LMG 12228 / 1C / PRS 101 / PAO1)</name>
    <dbReference type="NCBI Taxonomy" id="208964"/>
    <lineage>
        <taxon>Bacteria</taxon>
        <taxon>Pseudomonadati</taxon>
        <taxon>Pseudomonadota</taxon>
        <taxon>Gammaproteobacteria</taxon>
        <taxon>Pseudomonadales</taxon>
        <taxon>Pseudomonadaceae</taxon>
        <taxon>Pseudomonas</taxon>
    </lineage>
</organism>